<feature type="chain" id="PRO_1000018780" description="Phosphoribosylaminoimidazole-succinocarboxamide synthase">
    <location>
        <begin position="1"/>
        <end position="237"/>
    </location>
</feature>
<evidence type="ECO:0000255" key="1">
    <source>
        <dbReference type="HAMAP-Rule" id="MF_00137"/>
    </source>
</evidence>
<comment type="catalytic activity">
    <reaction evidence="1">
        <text>5-amino-1-(5-phospho-D-ribosyl)imidazole-4-carboxylate + L-aspartate + ATP = (2S)-2-[5-amino-1-(5-phospho-beta-D-ribosyl)imidazole-4-carboxamido]succinate + ADP + phosphate + 2 H(+)</text>
        <dbReference type="Rhea" id="RHEA:22628"/>
        <dbReference type="ChEBI" id="CHEBI:15378"/>
        <dbReference type="ChEBI" id="CHEBI:29991"/>
        <dbReference type="ChEBI" id="CHEBI:30616"/>
        <dbReference type="ChEBI" id="CHEBI:43474"/>
        <dbReference type="ChEBI" id="CHEBI:58443"/>
        <dbReference type="ChEBI" id="CHEBI:77657"/>
        <dbReference type="ChEBI" id="CHEBI:456216"/>
        <dbReference type="EC" id="6.3.2.6"/>
    </reaction>
</comment>
<comment type="pathway">
    <text evidence="1">Purine metabolism; IMP biosynthesis via de novo pathway; 5-amino-1-(5-phospho-D-ribosyl)imidazole-4-carboxamide from 5-amino-1-(5-phospho-D-ribosyl)imidazole-4-carboxylate: step 1/2.</text>
</comment>
<comment type="similarity">
    <text evidence="1">Belongs to the SAICAR synthetase family.</text>
</comment>
<proteinExistence type="inferred from homology"/>
<keyword id="KW-0067">ATP-binding</keyword>
<keyword id="KW-0436">Ligase</keyword>
<keyword id="KW-0547">Nucleotide-binding</keyword>
<keyword id="KW-0658">Purine biosynthesis</keyword>
<keyword id="KW-1185">Reference proteome</keyword>
<organism>
    <name type="scientific">Shigella sonnei (strain Ss046)</name>
    <dbReference type="NCBI Taxonomy" id="300269"/>
    <lineage>
        <taxon>Bacteria</taxon>
        <taxon>Pseudomonadati</taxon>
        <taxon>Pseudomonadota</taxon>
        <taxon>Gammaproteobacteria</taxon>
        <taxon>Enterobacterales</taxon>
        <taxon>Enterobacteriaceae</taxon>
        <taxon>Shigella</taxon>
    </lineage>
</organism>
<protein>
    <recommendedName>
        <fullName evidence="1">Phosphoribosylaminoimidazole-succinocarboxamide synthase</fullName>
        <ecNumber evidence="1">6.3.2.6</ecNumber>
    </recommendedName>
    <alternativeName>
        <fullName evidence="1">SAICAR synthetase</fullName>
    </alternativeName>
</protein>
<reference key="1">
    <citation type="journal article" date="2005" name="Nucleic Acids Res.">
        <title>Genome dynamics and diversity of Shigella species, the etiologic agents of bacillary dysentery.</title>
        <authorList>
            <person name="Yang F."/>
            <person name="Yang J."/>
            <person name="Zhang X."/>
            <person name="Chen L."/>
            <person name="Jiang Y."/>
            <person name="Yan Y."/>
            <person name="Tang X."/>
            <person name="Wang J."/>
            <person name="Xiong Z."/>
            <person name="Dong J."/>
            <person name="Xue Y."/>
            <person name="Zhu Y."/>
            <person name="Xu X."/>
            <person name="Sun L."/>
            <person name="Chen S."/>
            <person name="Nie H."/>
            <person name="Peng J."/>
            <person name="Xu J."/>
            <person name="Wang Y."/>
            <person name="Yuan Z."/>
            <person name="Wen Y."/>
            <person name="Yao Z."/>
            <person name="Shen Y."/>
            <person name="Qiang B."/>
            <person name="Hou Y."/>
            <person name="Yu J."/>
            <person name="Jin Q."/>
        </authorList>
    </citation>
    <scope>NUCLEOTIDE SEQUENCE [LARGE SCALE GENOMIC DNA]</scope>
    <source>
        <strain>Ss046</strain>
    </source>
</reference>
<dbReference type="EC" id="6.3.2.6" evidence="1"/>
<dbReference type="EMBL" id="CP000038">
    <property type="protein sequence ID" value="AAZ89186.1"/>
    <property type="molecule type" value="Genomic_DNA"/>
</dbReference>
<dbReference type="RefSeq" id="WP_001385429.1">
    <property type="nucleotide sequence ID" value="NC_007384.1"/>
</dbReference>
<dbReference type="SMR" id="Q3YZ76"/>
<dbReference type="GeneID" id="93774662"/>
<dbReference type="KEGG" id="ssn:SSON_2557"/>
<dbReference type="HOGENOM" id="CLU_061495_2_1_6"/>
<dbReference type="UniPathway" id="UPA00074">
    <property type="reaction ID" value="UER00131"/>
</dbReference>
<dbReference type="Proteomes" id="UP000002529">
    <property type="component" value="Chromosome"/>
</dbReference>
<dbReference type="GO" id="GO:0005829">
    <property type="term" value="C:cytosol"/>
    <property type="evidence" value="ECO:0007669"/>
    <property type="project" value="TreeGrafter"/>
</dbReference>
<dbReference type="GO" id="GO:0005524">
    <property type="term" value="F:ATP binding"/>
    <property type="evidence" value="ECO:0007669"/>
    <property type="project" value="UniProtKB-KW"/>
</dbReference>
<dbReference type="GO" id="GO:0004639">
    <property type="term" value="F:phosphoribosylaminoimidazolesuccinocarboxamide synthase activity"/>
    <property type="evidence" value="ECO:0007669"/>
    <property type="project" value="UniProtKB-UniRule"/>
</dbReference>
<dbReference type="GO" id="GO:0006189">
    <property type="term" value="P:'de novo' IMP biosynthetic process"/>
    <property type="evidence" value="ECO:0007669"/>
    <property type="project" value="UniProtKB-UniRule"/>
</dbReference>
<dbReference type="GO" id="GO:0009236">
    <property type="term" value="P:cobalamin biosynthetic process"/>
    <property type="evidence" value="ECO:0007669"/>
    <property type="project" value="InterPro"/>
</dbReference>
<dbReference type="CDD" id="cd01415">
    <property type="entry name" value="SAICAR_synt_PurC"/>
    <property type="match status" value="1"/>
</dbReference>
<dbReference type="FunFam" id="3.30.200.20:FF:000086">
    <property type="entry name" value="Phosphoribosylaminoimidazole-succinocarboxamide synthase"/>
    <property type="match status" value="1"/>
</dbReference>
<dbReference type="FunFam" id="3.30.470.20:FF:000006">
    <property type="entry name" value="Phosphoribosylaminoimidazole-succinocarboxamide synthase"/>
    <property type="match status" value="1"/>
</dbReference>
<dbReference type="Gene3D" id="3.30.470.20">
    <property type="entry name" value="ATP-grasp fold, B domain"/>
    <property type="match status" value="1"/>
</dbReference>
<dbReference type="Gene3D" id="3.30.200.20">
    <property type="entry name" value="Phosphorylase Kinase, domain 1"/>
    <property type="match status" value="1"/>
</dbReference>
<dbReference type="HAMAP" id="MF_00137">
    <property type="entry name" value="SAICAR_synth"/>
    <property type="match status" value="1"/>
</dbReference>
<dbReference type="InterPro" id="IPR028923">
    <property type="entry name" value="SAICAR_synt/ADE2_N"/>
</dbReference>
<dbReference type="InterPro" id="IPR033934">
    <property type="entry name" value="SAICAR_synt_PurC"/>
</dbReference>
<dbReference type="InterPro" id="IPR001636">
    <property type="entry name" value="SAICAR_synth"/>
</dbReference>
<dbReference type="InterPro" id="IPR050089">
    <property type="entry name" value="SAICAR_synthetase"/>
</dbReference>
<dbReference type="InterPro" id="IPR018236">
    <property type="entry name" value="SAICAR_synthetase_CS"/>
</dbReference>
<dbReference type="NCBIfam" id="TIGR00081">
    <property type="entry name" value="purC"/>
    <property type="match status" value="1"/>
</dbReference>
<dbReference type="PANTHER" id="PTHR43599">
    <property type="entry name" value="MULTIFUNCTIONAL PROTEIN ADE2"/>
    <property type="match status" value="1"/>
</dbReference>
<dbReference type="PANTHER" id="PTHR43599:SF3">
    <property type="entry name" value="SI:DKEY-6E2.2"/>
    <property type="match status" value="1"/>
</dbReference>
<dbReference type="Pfam" id="PF01259">
    <property type="entry name" value="SAICAR_synt"/>
    <property type="match status" value="1"/>
</dbReference>
<dbReference type="SUPFAM" id="SSF56104">
    <property type="entry name" value="SAICAR synthase-like"/>
    <property type="match status" value="1"/>
</dbReference>
<dbReference type="PROSITE" id="PS01057">
    <property type="entry name" value="SAICAR_SYNTHETASE_1"/>
    <property type="match status" value="1"/>
</dbReference>
<dbReference type="PROSITE" id="PS01058">
    <property type="entry name" value="SAICAR_SYNTHETASE_2"/>
    <property type="match status" value="1"/>
</dbReference>
<name>PUR7_SHISS</name>
<sequence>MQKQAELYRGKAKTVYSTENPDLLVLEFRNDTSAGDGARIEQFDRKGMLNNKFNYFIMSKLAEAGIPTQMERLLSDTECLVKKLDMVPVECVVRNRAAGSLVKRLGIEEGIELNPPLFDLFLKNDAMHDPMVNESYCETFGWVSKENLARMKELTYKANDVLKKLFDDAGLILVDFKLEFGLYKGEVVLGDEFSPDGSRLWDKETLEKMDKDRFRQSLGGLIEAYEAVARRLGVQLD</sequence>
<gene>
    <name evidence="1" type="primary">purC</name>
    <name type="ordered locus">SSON_2557</name>
</gene>
<accession>Q3YZ76</accession>